<organismHost>
    <name type="scientific">Acidianus sp. F28</name>
    <dbReference type="NCBI Taxonomy" id="315458"/>
</organismHost>
<keyword id="KW-1185">Reference proteome</keyword>
<accession>Q573G0</accession>
<gene>
    <name type="ORF">ORF142</name>
</gene>
<name>Y142_AFV2P</name>
<organism>
    <name type="scientific">Acidianus filamentous virus 2 (isolate Italy/Pozzuoli)</name>
    <name type="common">AFV-2</name>
    <dbReference type="NCBI Taxonomy" id="654910"/>
    <lineage>
        <taxon>Viruses</taxon>
        <taxon>Adnaviria</taxon>
        <taxon>Zilligvirae</taxon>
        <taxon>Taleaviricota</taxon>
        <taxon>Tokiviricetes</taxon>
        <taxon>Ligamenvirales</taxon>
        <taxon>Lipothrixviridae</taxon>
        <taxon>Deltalipothrixvirus</taxon>
        <taxon>Acidianus filamentous virus 2</taxon>
    </lineage>
</organism>
<feature type="chain" id="PRO_0000384509" description="Uncharacterized protein ORF142">
    <location>
        <begin position="1"/>
        <end position="142"/>
    </location>
</feature>
<feature type="region of interest" description="Disordered" evidence="1">
    <location>
        <begin position="1"/>
        <end position="31"/>
    </location>
</feature>
<feature type="compositionally biased region" description="Acidic residues" evidence="1">
    <location>
        <begin position="11"/>
        <end position="29"/>
    </location>
</feature>
<evidence type="ECO:0000256" key="1">
    <source>
        <dbReference type="SAM" id="MobiDB-lite"/>
    </source>
</evidence>
<protein>
    <recommendedName>
        <fullName>Uncharacterized protein ORF142</fullName>
    </recommendedName>
</protein>
<dbReference type="EMBL" id="AJ854042">
    <property type="protein sequence ID" value="CAH69396.1"/>
    <property type="molecule type" value="Genomic_DNA"/>
</dbReference>
<dbReference type="RefSeq" id="YP_001496934.1">
    <property type="nucleotide sequence ID" value="NC_009884.1"/>
</dbReference>
<dbReference type="KEGG" id="vg:5656095"/>
<dbReference type="Proteomes" id="UP000006364">
    <property type="component" value="Genome"/>
</dbReference>
<sequence length="142" mass="16263">MSLPKKKKPEVEEEEKPEEEEEKEEEQEIDINNLEWQNIATSNAFKVDIGDEIIFKPTSEPKQVKSGSAFVVDAYVYQWKSQNQVPQKGNATLYIQTVLGNAIIRAVQQYGLGNFVVHAKNKGRAKGKLYYDYEIKIAKVKQ</sequence>
<proteinExistence type="predicted"/>
<reference key="1">
    <citation type="journal article" date="2005" name="J. Bacteriol.">
        <title>Structure and genome organization of AFV2, a novel archaeal lipothrixvirus with unusual terminal and core structures.</title>
        <authorList>
            <person name="Haring M."/>
            <person name="Vestergaard G."/>
            <person name="Brugger K."/>
            <person name="Rachel R."/>
            <person name="Garrett R.A."/>
            <person name="Prangishvili D."/>
        </authorList>
    </citation>
    <scope>NUCLEOTIDE SEQUENCE [GENOMIC DNA]</scope>
</reference>